<dbReference type="EMBL" id="AB008236">
    <property type="protein sequence ID" value="BAA77524.1"/>
    <property type="molecule type" value="Genomic_RNA"/>
</dbReference>
<dbReference type="SMR" id="Q9WAI8"/>
<dbReference type="GO" id="GO:0005576">
    <property type="term" value="C:extracellular region"/>
    <property type="evidence" value="ECO:0007669"/>
    <property type="project" value="UniProtKB-SubCell"/>
</dbReference>
<dbReference type="GO" id="GO:0044155">
    <property type="term" value="C:host caveola"/>
    <property type="evidence" value="ECO:0007669"/>
    <property type="project" value="UniProtKB-SubCell"/>
</dbReference>
<dbReference type="GO" id="GO:0044169">
    <property type="term" value="C:host cell rough endoplasmic reticulum membrane"/>
    <property type="evidence" value="ECO:0007669"/>
    <property type="project" value="UniProtKB-SubCell"/>
</dbReference>
<dbReference type="GO" id="GO:0016020">
    <property type="term" value="C:membrane"/>
    <property type="evidence" value="ECO:0007669"/>
    <property type="project" value="UniProtKB-UniRule"/>
</dbReference>
<dbReference type="GO" id="GO:0015267">
    <property type="term" value="F:channel activity"/>
    <property type="evidence" value="ECO:0007669"/>
    <property type="project" value="UniProtKB-KW"/>
</dbReference>
<dbReference type="GO" id="GO:0046872">
    <property type="term" value="F:metal ion binding"/>
    <property type="evidence" value="ECO:0007669"/>
    <property type="project" value="UniProtKB-UniRule"/>
</dbReference>
<dbReference type="GO" id="GO:0090729">
    <property type="term" value="F:toxin activity"/>
    <property type="evidence" value="ECO:0007669"/>
    <property type="project" value="UniProtKB-UniRule"/>
</dbReference>
<dbReference type="GO" id="GO:0034220">
    <property type="term" value="P:monoatomic ion transmembrane transport"/>
    <property type="evidence" value="ECO:0007669"/>
    <property type="project" value="UniProtKB-KW"/>
</dbReference>
<dbReference type="GO" id="GO:0039520">
    <property type="term" value="P:symbiont-mediated activation of host autophagy"/>
    <property type="evidence" value="ECO:0007669"/>
    <property type="project" value="UniProtKB-KW"/>
</dbReference>
<dbReference type="GO" id="GO:0016032">
    <property type="term" value="P:viral process"/>
    <property type="evidence" value="ECO:0007669"/>
    <property type="project" value="UniProtKB-UniRule"/>
</dbReference>
<dbReference type="Gene3D" id="1.20.5.430">
    <property type="match status" value="1"/>
</dbReference>
<dbReference type="HAMAP" id="MF_04091">
    <property type="entry name" value="ROTA_NSP4"/>
    <property type="match status" value="1"/>
</dbReference>
<dbReference type="InterPro" id="IPR002107">
    <property type="entry name" value="Rotavirus_NSP4"/>
</dbReference>
<dbReference type="Pfam" id="PF01452">
    <property type="entry name" value="Rota_NSP4"/>
    <property type="match status" value="1"/>
</dbReference>
<dbReference type="SUPFAM" id="SSF58030">
    <property type="entry name" value="Rotavirus nonstructural proteins"/>
    <property type="match status" value="1"/>
</dbReference>
<keyword id="KW-1072">Activation of host autophagy by virus</keyword>
<keyword id="KW-0106">Calcium</keyword>
<keyword id="KW-0260">Enterotoxin</keyword>
<keyword id="KW-0325">Glycoprotein</keyword>
<keyword id="KW-1038">Host endoplasmic reticulum</keyword>
<keyword id="KW-1043">Host membrane</keyword>
<keyword id="KW-0945">Host-virus interaction</keyword>
<keyword id="KW-0407">Ion channel</keyword>
<keyword id="KW-0406">Ion transport</keyword>
<keyword id="KW-0472">Membrane</keyword>
<keyword id="KW-0479">Metal-binding</keyword>
<keyword id="KW-0964">Secreted</keyword>
<keyword id="KW-0735">Signal-anchor</keyword>
<keyword id="KW-0800">Toxin</keyword>
<keyword id="KW-0812">Transmembrane</keyword>
<keyword id="KW-1133">Transmembrane helix</keyword>
<keyword id="KW-0813">Transport</keyword>
<keyword id="KW-1182">Viral ion channel</keyword>
<keyword id="KW-0843">Virulence</keyword>
<protein>
    <recommendedName>
        <fullName evidence="1">Non-structural glycoprotein 4</fullName>
        <shortName evidence="1">NSP4</shortName>
    </recommendedName>
    <alternativeName>
        <fullName evidence="1">NCVP5</fullName>
    </alternativeName>
    <alternativeName>
        <fullName evidence="1">NS28</fullName>
    </alternativeName>
</protein>
<reference key="1">
    <citation type="journal article" date="1999" name="Microbiol. Immunol.">
        <title>Genetic variation in the VP4 and NSP4 genes of human rotavirus serotype 3 (G3 type) isolated in China and Japan.</title>
        <authorList>
            <person name="Cao X.R."/>
            <person name="Akihara S."/>
            <person name="Fang Z.Y."/>
            <person name="Nakagomi O."/>
            <person name="Ushijima H."/>
        </authorList>
    </citation>
    <scope>NUCLEOTIDE SEQUENCE [GENOMIC RNA]</scope>
</reference>
<accession>Q9WAI8</accession>
<feature type="chain" id="PRO_0000369484" description="Non-structural glycoprotein 4">
    <location>
        <begin position="1"/>
        <end position="175"/>
    </location>
</feature>
<feature type="topological domain" description="Lumenal" evidence="1">
    <location>
        <begin position="1"/>
        <end position="28"/>
    </location>
</feature>
<feature type="transmembrane region" description="Helical; Signal-anchor for type III membrane protein" evidence="1">
    <location>
        <begin position="29"/>
        <end position="51"/>
    </location>
</feature>
<feature type="topological domain" description="Cytoplasmic" evidence="1">
    <location>
        <begin position="52"/>
        <end position="175"/>
    </location>
</feature>
<feature type="binding site" evidence="1">
    <location>
        <position position="120"/>
    </location>
    <ligand>
        <name>Ca(2+)</name>
        <dbReference type="ChEBI" id="CHEBI:29108"/>
    </ligand>
</feature>
<feature type="binding site" evidence="1">
    <location>
        <position position="123"/>
    </location>
    <ligand>
        <name>Ca(2+)</name>
        <dbReference type="ChEBI" id="CHEBI:29108"/>
    </ligand>
</feature>
<feature type="glycosylation site" description="N-linked (GlcNAc...) asparagine; by host" evidence="1">
    <location>
        <position position="8"/>
    </location>
</feature>
<feature type="glycosylation site" description="N-linked (GlcNAc...) asparagine; by host" evidence="1">
    <location>
        <position position="18"/>
    </location>
</feature>
<evidence type="ECO:0000255" key="1">
    <source>
        <dbReference type="HAMAP-Rule" id="MF_04091"/>
    </source>
</evidence>
<proteinExistence type="inferred from homology"/>
<organism>
    <name type="scientific">Rotavirus A (strain RVA/Human/Japan/YO/1977/G3P1A[8])</name>
    <name type="common">RV-A</name>
    <dbReference type="NCBI Taxonomy" id="578832"/>
    <lineage>
        <taxon>Viruses</taxon>
        <taxon>Riboviria</taxon>
        <taxon>Orthornavirae</taxon>
        <taxon>Duplornaviricota</taxon>
        <taxon>Resentoviricetes</taxon>
        <taxon>Reovirales</taxon>
        <taxon>Sedoreoviridae</taxon>
        <taxon>Rotavirus</taxon>
        <taxon>Rotavirus A</taxon>
    </lineage>
</organism>
<sequence length="175" mass="20094">MDKLADLNYTLSVITLMNDTLHSIIQDPGMAYFPYIASVLTVLFTLHKASIPTMKIALKTSKCSYKVIKHCIVTIINTLLKLAGYKEQVTNKDEIEQQMDRIVKEMRRQLEMIDKLTTREIEQVELLKSIHDNLTTKPVDVIDMSKEFNQKNIKTLDEWVSGKNPYEPSEVTASM</sequence>
<name>NSP4_ROTYO</name>
<comment type="function">
    <text evidence="1">Plays an essential role in the virus replication cycle by acting as a viroporin. Creates a pore in the host endoplasmic reticulum and as a consequence releases Ca(2+) in the cytoplasm of infected cell. In turn, high levels of cytoplasmic calcium trigger membrane trafficking and transport of viral ER-associated proteins to viroplasms, sites of viral genome replication and immature particle assembly.</text>
</comment>
<comment type="function">
    <text evidence="1">The secreted form acts as an enterotoxin that causes phospholipase C-dependent elevation of the intracellular calcium concentration in host intestinal mucosa cells. Increased concentration of intracellular calcium disrupts the cytoskeleton and the tight junctions, raising the paracellular permeability. Potentiates chloride ion secretion through a calcium ion-dependent signaling pathway, inducing age-dependent diarrhea. To perform this enterotoxigenic role in vivo, NSP4 is released from infected enterocytes in a soluble form capable of diffusing within the intestinal lumen and interacting with host plasma membrane receptors on neighboring epithelial cells such as integrins ITGA1/ITGB1 and ITGA2/ITGB1.</text>
</comment>
<comment type="subunit">
    <text evidence="1">Homotetramer. Interacts with the immature particle in the viroplasm. Interacts with host CAV1, early and late in infection. Interacts with host integrin ITGA1/ITGB1 heterodimer. Interacts with host integrin ITGA2/ITGB1 heterodimer. Interaction with microtubules blocks trafficking to the Golgi apparatus.</text>
</comment>
<comment type="subcellular location">
    <subcellularLocation>
        <location evidence="1">Host rough endoplasmic reticulum membrane</location>
        <topology evidence="1">Single-pass type III membrane protein</topology>
    </subcellularLocation>
    <subcellularLocation>
        <location evidence="1">Host membrane</location>
        <location evidence="1">Host caveola</location>
        <topology evidence="1">Single-pass type III membrane protein</topology>
    </subcellularLocation>
    <subcellularLocation>
        <location evidence="1">Secreted</location>
    </subcellularLocation>
    <text evidence="1">NSP4 also localizes in vesicular structures which contain autophagosomal markers and associate with viroplasms in virus-infected cells. Additionally, a soluble form of glycosylated NSP4 is secreted despite retention of its transmembrane domain.</text>
</comment>
<comment type="domain">
    <text evidence="1">Binds 1 calcium ion per tetramer.</text>
</comment>
<comment type="PTM">
    <text evidence="1">The N-glycosyl content is primarily Man(9)GlcNAc, with a small amount of Man(8)GlcNAc.</text>
</comment>
<comment type="similarity">
    <text evidence="1">Belongs to the rotavirus NSP4 family.</text>
</comment>
<organismHost>
    <name type="scientific">Homo sapiens</name>
    <name type="common">Human</name>
    <dbReference type="NCBI Taxonomy" id="9606"/>
</organismHost>